<keyword id="KW-0378">Hydrolase</keyword>
<keyword id="KW-0460">Magnesium</keyword>
<keyword id="KW-0479">Metal-binding</keyword>
<keyword id="KW-0539">Nucleus</keyword>
<keyword id="KW-0904">Protein phosphatase</keyword>
<keyword id="KW-1185">Reference proteome</keyword>
<name>UBCP_ARATH</name>
<protein>
    <recommendedName>
        <fullName>Ubiquitin-like domain-containing CTD phosphatase</fullName>
        <ecNumber evidence="2">3.1.3.16</ecNumber>
    </recommendedName>
    <alternativeName>
        <fullName>Nuclear proteasome inhibitor UBLCP1</fullName>
    </alternativeName>
</protein>
<accession>Q8W3M6</accession>
<reference key="1">
    <citation type="journal article" date="2001" name="DNA Res.">
        <title>The size and sequence organization of the centromeric region of Arabidopsis thaliana chromosome 4.</title>
        <authorList>
            <person name="Kumekawa N."/>
            <person name="Hosouchi T."/>
            <person name="Tsuruoka H."/>
            <person name="Kotani H."/>
        </authorList>
    </citation>
    <scope>NUCLEOTIDE SEQUENCE [LARGE SCALE GENOMIC DNA]</scope>
    <source>
        <strain>cv. Columbia</strain>
    </source>
</reference>
<reference key="2">
    <citation type="journal article" date="2017" name="Plant J.">
        <title>Araport11: a complete reannotation of the Arabidopsis thaliana reference genome.</title>
        <authorList>
            <person name="Cheng C.Y."/>
            <person name="Krishnakumar V."/>
            <person name="Chan A.P."/>
            <person name="Thibaud-Nissen F."/>
            <person name="Schobel S."/>
            <person name="Town C.D."/>
        </authorList>
    </citation>
    <scope>GENOME REANNOTATION</scope>
    <source>
        <strain>cv. Columbia</strain>
    </source>
</reference>
<sequence length="340" mass="38956">MASSSSSPTPSAAAAVSPLTEEELTLTVKWNGKEYTVRICADDSVAELKRRICLLTTVLPKRQKLLYPKIGNKLSDDSLLLSSISFKPSLKMTMIGTVEDDIIVDQAESPEIVDDFELGKEEAVDVKDKEVNKQKLRRRIDQYKINLRTPCRQGKKLLVLDIDYTLFDHRSTAENPLQLMRPYLHEFLTAAYAEYDIMIWSATSMKWVELKMTELGVLNNPNYKVTALLDHLAMITVQSDTRGIFDCKPLGLIWALLPEFYNPGNTIMFDDLRRNFVMNPQNGLTIKPFRKAHANRDTDQELVKLTQYLLTIAELSDLSSLHHSRWESFSQDNVKRRRQE</sequence>
<proteinExistence type="evidence at transcript level"/>
<feature type="chain" id="PRO_0000305941" description="Ubiquitin-like domain-containing CTD phosphatase">
    <location>
        <begin position="1"/>
        <end position="340"/>
    </location>
</feature>
<feature type="domain" description="Ubiquitin-like" evidence="4">
    <location>
        <begin position="24"/>
        <end position="101"/>
    </location>
</feature>
<feature type="domain" description="FCP1 homology" evidence="5">
    <location>
        <begin position="151"/>
        <end position="312"/>
    </location>
</feature>
<feature type="region of interest" description="Phosphatase" evidence="1">
    <location>
        <begin position="151"/>
        <end position="312"/>
    </location>
</feature>
<feature type="binding site" evidence="3">
    <location>
        <position position="161"/>
    </location>
    <ligand>
        <name>Mg(2+)</name>
        <dbReference type="ChEBI" id="CHEBI:18420"/>
    </ligand>
</feature>
<feature type="binding site" evidence="3">
    <location>
        <position position="163"/>
    </location>
    <ligand>
        <name>Mg(2+)</name>
        <dbReference type="ChEBI" id="CHEBI:18420"/>
    </ligand>
</feature>
<feature type="binding site" evidence="3">
    <location>
        <position position="271"/>
    </location>
    <ligand>
        <name>Mg(2+)</name>
        <dbReference type="ChEBI" id="CHEBI:18420"/>
    </ligand>
</feature>
<organism>
    <name type="scientific">Arabidopsis thaliana</name>
    <name type="common">Mouse-ear cress</name>
    <dbReference type="NCBI Taxonomy" id="3702"/>
    <lineage>
        <taxon>Eukaryota</taxon>
        <taxon>Viridiplantae</taxon>
        <taxon>Streptophyta</taxon>
        <taxon>Embryophyta</taxon>
        <taxon>Tracheophyta</taxon>
        <taxon>Spermatophyta</taxon>
        <taxon>Magnoliopsida</taxon>
        <taxon>eudicotyledons</taxon>
        <taxon>Gunneridae</taxon>
        <taxon>Pentapetalae</taxon>
        <taxon>rosids</taxon>
        <taxon>malvids</taxon>
        <taxon>Brassicales</taxon>
        <taxon>Brassicaceae</taxon>
        <taxon>Camelineae</taxon>
        <taxon>Arabidopsis</taxon>
    </lineage>
</organism>
<evidence type="ECO:0000250" key="1"/>
<evidence type="ECO:0000250" key="2">
    <source>
        <dbReference type="UniProtKB" id="Q8WVY7"/>
    </source>
</evidence>
<evidence type="ECO:0000250" key="3">
    <source>
        <dbReference type="UniProtKB" id="Q9XZ16"/>
    </source>
</evidence>
<evidence type="ECO:0000255" key="4">
    <source>
        <dbReference type="PROSITE-ProRule" id="PRU00214"/>
    </source>
</evidence>
<evidence type="ECO:0000255" key="5">
    <source>
        <dbReference type="PROSITE-ProRule" id="PRU00336"/>
    </source>
</evidence>
<comment type="function">
    <text evidence="2">Dephosphorylates 26S nuclear proteasomes, thereby decreasing their proteolytic activity. The dephosphorylation may prevent assembly of the core and regulatory particles (CP and RP) into mature 26S proteasome.</text>
</comment>
<comment type="catalytic activity">
    <reaction evidence="2">
        <text>O-phospho-L-seryl-[protein] + H2O = L-seryl-[protein] + phosphate</text>
        <dbReference type="Rhea" id="RHEA:20629"/>
        <dbReference type="Rhea" id="RHEA-COMP:9863"/>
        <dbReference type="Rhea" id="RHEA-COMP:11604"/>
        <dbReference type="ChEBI" id="CHEBI:15377"/>
        <dbReference type="ChEBI" id="CHEBI:29999"/>
        <dbReference type="ChEBI" id="CHEBI:43474"/>
        <dbReference type="ChEBI" id="CHEBI:83421"/>
        <dbReference type="EC" id="3.1.3.16"/>
    </reaction>
</comment>
<comment type="catalytic activity">
    <reaction evidence="2">
        <text>O-phospho-L-threonyl-[protein] + H2O = L-threonyl-[protein] + phosphate</text>
        <dbReference type="Rhea" id="RHEA:47004"/>
        <dbReference type="Rhea" id="RHEA-COMP:11060"/>
        <dbReference type="Rhea" id="RHEA-COMP:11605"/>
        <dbReference type="ChEBI" id="CHEBI:15377"/>
        <dbReference type="ChEBI" id="CHEBI:30013"/>
        <dbReference type="ChEBI" id="CHEBI:43474"/>
        <dbReference type="ChEBI" id="CHEBI:61977"/>
        <dbReference type="EC" id="3.1.3.16"/>
    </reaction>
</comment>
<comment type="cofactor">
    <cofactor evidence="2">
        <name>Mg(2+)</name>
        <dbReference type="ChEBI" id="CHEBI:18420"/>
    </cofactor>
</comment>
<comment type="subcellular location">
    <subcellularLocation>
        <location evidence="2">Nucleus</location>
    </subcellularLocation>
    <text evidence="2">Colocalizes with nuclear proteasomes.</text>
</comment>
<comment type="domain">
    <text evidence="2">The Ubiquitin-like domain mediates interaction with proteasomes.</text>
</comment>
<dbReference type="EC" id="3.1.3.16" evidence="2"/>
<dbReference type="EMBL" id="AB073160">
    <property type="protein sequence ID" value="BAB83612.1"/>
    <property type="molecule type" value="Genomic_DNA"/>
</dbReference>
<dbReference type="EMBL" id="CP002687">
    <property type="protein sequence ID" value="AEE82552.1"/>
    <property type="molecule type" value="Genomic_DNA"/>
</dbReference>
<dbReference type="RefSeq" id="NP_849320.1">
    <property type="nucleotide sequence ID" value="NM_178989.3"/>
</dbReference>
<dbReference type="SMR" id="Q8W3M6"/>
<dbReference type="FunCoup" id="Q8W3M6">
    <property type="interactions" value="3932"/>
</dbReference>
<dbReference type="STRING" id="3702.Q8W3M6"/>
<dbReference type="GlyGen" id="Q8W3M6">
    <property type="glycosylation" value="1 site"/>
</dbReference>
<dbReference type="PaxDb" id="3702-AT4G06599.1"/>
<dbReference type="ProteomicsDB" id="228626"/>
<dbReference type="EnsemblPlants" id="AT4G06599.1">
    <property type="protein sequence ID" value="AT4G06599.1"/>
    <property type="gene ID" value="AT4G06599"/>
</dbReference>
<dbReference type="GeneID" id="826068"/>
<dbReference type="Gramene" id="AT4G06599.1">
    <property type="protein sequence ID" value="AT4G06599.1"/>
    <property type="gene ID" value="AT4G06599"/>
</dbReference>
<dbReference type="KEGG" id="ath:AT4G06599"/>
<dbReference type="Araport" id="AT4G06599"/>
<dbReference type="TAIR" id="AT4G06599"/>
<dbReference type="eggNOG" id="KOG1605">
    <property type="taxonomic scope" value="Eukaryota"/>
</dbReference>
<dbReference type="eggNOG" id="KOG1872">
    <property type="taxonomic scope" value="Eukaryota"/>
</dbReference>
<dbReference type="HOGENOM" id="CLU_046931_1_0_1"/>
<dbReference type="InParanoid" id="Q8W3M6"/>
<dbReference type="OMA" id="TVHTPKY"/>
<dbReference type="OrthoDB" id="1711508at2759"/>
<dbReference type="PhylomeDB" id="Q8W3M6"/>
<dbReference type="PRO" id="PR:Q8W3M6"/>
<dbReference type="Proteomes" id="UP000006548">
    <property type="component" value="Chromosome 4"/>
</dbReference>
<dbReference type="ExpressionAtlas" id="Q8W3M6">
    <property type="expression patterns" value="baseline and differential"/>
</dbReference>
<dbReference type="GO" id="GO:0005634">
    <property type="term" value="C:nucleus"/>
    <property type="evidence" value="ECO:0007669"/>
    <property type="project" value="UniProtKB-SubCell"/>
</dbReference>
<dbReference type="GO" id="GO:0046872">
    <property type="term" value="F:metal ion binding"/>
    <property type="evidence" value="ECO:0007669"/>
    <property type="project" value="UniProtKB-KW"/>
</dbReference>
<dbReference type="GO" id="GO:0004722">
    <property type="term" value="F:protein serine/threonine phosphatase activity"/>
    <property type="evidence" value="ECO:0007669"/>
    <property type="project" value="UniProtKB-EC"/>
</dbReference>
<dbReference type="GO" id="GO:0090364">
    <property type="term" value="P:regulation of proteasome assembly"/>
    <property type="evidence" value="ECO:0007669"/>
    <property type="project" value="InterPro"/>
</dbReference>
<dbReference type="CDD" id="cd01813">
    <property type="entry name" value="Ubl_UBLCP1"/>
    <property type="match status" value="1"/>
</dbReference>
<dbReference type="Gene3D" id="3.40.50.1000">
    <property type="entry name" value="HAD superfamily/HAD-like"/>
    <property type="match status" value="1"/>
</dbReference>
<dbReference type="Gene3D" id="3.10.20.90">
    <property type="entry name" value="Phosphatidylinositol 3-kinase Catalytic Subunit, Chain A, domain 1"/>
    <property type="match status" value="1"/>
</dbReference>
<dbReference type="InterPro" id="IPR004274">
    <property type="entry name" value="FCP1_dom"/>
</dbReference>
<dbReference type="InterPro" id="IPR036412">
    <property type="entry name" value="HAD-like_sf"/>
</dbReference>
<dbReference type="InterPro" id="IPR011943">
    <property type="entry name" value="HAD-SF_hydro_IIID"/>
</dbReference>
<dbReference type="InterPro" id="IPR023214">
    <property type="entry name" value="HAD_sf"/>
</dbReference>
<dbReference type="InterPro" id="IPR000626">
    <property type="entry name" value="Ubiquitin-like_dom"/>
</dbReference>
<dbReference type="InterPro" id="IPR029071">
    <property type="entry name" value="Ubiquitin-like_domsf"/>
</dbReference>
<dbReference type="InterPro" id="IPR051658">
    <property type="entry name" value="UBLCP1"/>
</dbReference>
<dbReference type="NCBIfam" id="TIGR02245">
    <property type="entry name" value="HAD_IIID1"/>
    <property type="match status" value="1"/>
</dbReference>
<dbReference type="PANTHER" id="PTHR48493">
    <property type="entry name" value="UBIQUITIN-LIKE DOMAIN-CONTAINING CTD PHOSPHATASE 1"/>
    <property type="match status" value="1"/>
</dbReference>
<dbReference type="PANTHER" id="PTHR48493:SF1">
    <property type="entry name" value="UBIQUITIN-LIKE DOMAIN-CONTAINING CTD PHOSPHATASE 1"/>
    <property type="match status" value="1"/>
</dbReference>
<dbReference type="Pfam" id="PF03031">
    <property type="entry name" value="NIF"/>
    <property type="match status" value="1"/>
</dbReference>
<dbReference type="Pfam" id="PF00240">
    <property type="entry name" value="ubiquitin"/>
    <property type="match status" value="1"/>
</dbReference>
<dbReference type="SMART" id="SM00577">
    <property type="entry name" value="CPDc"/>
    <property type="match status" value="1"/>
</dbReference>
<dbReference type="SMART" id="SM00213">
    <property type="entry name" value="UBQ"/>
    <property type="match status" value="1"/>
</dbReference>
<dbReference type="SUPFAM" id="SSF56784">
    <property type="entry name" value="HAD-like"/>
    <property type="match status" value="1"/>
</dbReference>
<dbReference type="SUPFAM" id="SSF54236">
    <property type="entry name" value="Ubiquitin-like"/>
    <property type="match status" value="1"/>
</dbReference>
<dbReference type="PROSITE" id="PS50969">
    <property type="entry name" value="FCP1"/>
    <property type="match status" value="1"/>
</dbReference>
<dbReference type="PROSITE" id="PS50053">
    <property type="entry name" value="UBIQUITIN_2"/>
    <property type="match status" value="1"/>
</dbReference>
<gene>
    <name type="ordered locus">At4g06599</name>
    <name type="ORF">T11G11</name>
</gene>